<accession>B5FJD8</accession>
<sequence length="408" mass="43752">MSLSVTRENFDEWMVPVYVPAPFIPVRGEGSRLWDQQGKEYIDFAGGIAVNALGHAHPALREALNEQANRFWHTGNGYTNEPALRLAKKLIDATFAERVFFCNSGAEANEAALKLARKYAHDRVGNHKSGIVAFKNAFHGRTLFTVSAGGQPTYSQDFAPLPPDIRHAAYNDLNSASALIDDNTCAVIVEPVQGEGGVIPATKAFLQGLRELCDRHQALLIFDEVQTGVGRTGELYAYMHYGVTPDILTTAKALGGGFPIGAMLTTQDYASVMTPGTHGTTYGGNPLATAVAGKVLDIINTPEMQNGVRQRHDAFIERLNTINVRFGMFSEIRGLGLLLGCVLQTEFAGKAKLIAQEAAKAGVMVLIAGGDVVRFAPALNVSDEEIATGLDRFALACERLQAGGASCG</sequence>
<gene>
    <name evidence="1" type="primary">astC</name>
    <name evidence="1" type="synonym">argM</name>
    <name type="ordered locus">SeD_A2043</name>
</gene>
<feature type="chain" id="PRO_1000164390" description="Succinylornithine transaminase">
    <location>
        <begin position="1"/>
        <end position="408"/>
    </location>
</feature>
<feature type="modified residue" description="N6-(pyridoxal phosphate)lysine" evidence="1">
    <location>
        <position position="252"/>
    </location>
</feature>
<organism>
    <name type="scientific">Salmonella dublin (strain CT_02021853)</name>
    <dbReference type="NCBI Taxonomy" id="439851"/>
    <lineage>
        <taxon>Bacteria</taxon>
        <taxon>Pseudomonadati</taxon>
        <taxon>Pseudomonadota</taxon>
        <taxon>Gammaproteobacteria</taxon>
        <taxon>Enterobacterales</taxon>
        <taxon>Enterobacteriaceae</taxon>
        <taxon>Salmonella</taxon>
    </lineage>
</organism>
<proteinExistence type="inferred from homology"/>
<dbReference type="EC" id="2.6.1.81" evidence="1"/>
<dbReference type="EMBL" id="CP001144">
    <property type="protein sequence ID" value="ACH74964.1"/>
    <property type="molecule type" value="Genomic_DNA"/>
</dbReference>
<dbReference type="RefSeq" id="WP_000059504.1">
    <property type="nucleotide sequence ID" value="NC_011205.1"/>
</dbReference>
<dbReference type="SMR" id="B5FJD8"/>
<dbReference type="KEGG" id="sed:SeD_A2043"/>
<dbReference type="HOGENOM" id="CLU_016922_10_1_6"/>
<dbReference type="UniPathway" id="UPA00185">
    <property type="reaction ID" value="UER00281"/>
</dbReference>
<dbReference type="Proteomes" id="UP000008322">
    <property type="component" value="Chromosome"/>
</dbReference>
<dbReference type="GO" id="GO:0042802">
    <property type="term" value="F:identical protein binding"/>
    <property type="evidence" value="ECO:0007669"/>
    <property type="project" value="TreeGrafter"/>
</dbReference>
<dbReference type="GO" id="GO:0030170">
    <property type="term" value="F:pyridoxal phosphate binding"/>
    <property type="evidence" value="ECO:0007669"/>
    <property type="project" value="UniProtKB-UniRule"/>
</dbReference>
<dbReference type="GO" id="GO:0043825">
    <property type="term" value="F:succinylornithine transaminase activity"/>
    <property type="evidence" value="ECO:0007669"/>
    <property type="project" value="UniProtKB-EC"/>
</dbReference>
<dbReference type="GO" id="GO:1901607">
    <property type="term" value="P:alpha-amino acid biosynthetic process"/>
    <property type="evidence" value="ECO:0007669"/>
    <property type="project" value="UniProtKB-ARBA"/>
</dbReference>
<dbReference type="GO" id="GO:0019544">
    <property type="term" value="P:arginine catabolic process to glutamate"/>
    <property type="evidence" value="ECO:0007669"/>
    <property type="project" value="UniProtKB-UniRule"/>
</dbReference>
<dbReference type="GO" id="GO:0019545">
    <property type="term" value="P:arginine catabolic process to succinate"/>
    <property type="evidence" value="ECO:0007669"/>
    <property type="project" value="UniProtKB-UniRule"/>
</dbReference>
<dbReference type="GO" id="GO:0006593">
    <property type="term" value="P:ornithine catabolic process"/>
    <property type="evidence" value="ECO:0007669"/>
    <property type="project" value="InterPro"/>
</dbReference>
<dbReference type="CDD" id="cd00610">
    <property type="entry name" value="OAT_like"/>
    <property type="match status" value="1"/>
</dbReference>
<dbReference type="FunFam" id="3.40.640.10:FF:000004">
    <property type="entry name" value="Acetylornithine aminotransferase"/>
    <property type="match status" value="1"/>
</dbReference>
<dbReference type="Gene3D" id="3.90.1150.10">
    <property type="entry name" value="Aspartate Aminotransferase, domain 1"/>
    <property type="match status" value="1"/>
</dbReference>
<dbReference type="Gene3D" id="3.40.640.10">
    <property type="entry name" value="Type I PLP-dependent aspartate aminotransferase-like (Major domain)"/>
    <property type="match status" value="1"/>
</dbReference>
<dbReference type="HAMAP" id="MF_01107">
    <property type="entry name" value="ArgD_aminotrans_3"/>
    <property type="match status" value="1"/>
</dbReference>
<dbReference type="HAMAP" id="MF_01173">
    <property type="entry name" value="AstC_aminotrans_3"/>
    <property type="match status" value="1"/>
</dbReference>
<dbReference type="InterPro" id="IPR017652">
    <property type="entry name" value="Ac/SucOrn_transaminase_bac"/>
</dbReference>
<dbReference type="InterPro" id="IPR004636">
    <property type="entry name" value="AcOrn/SuccOrn_fam"/>
</dbReference>
<dbReference type="InterPro" id="IPR005814">
    <property type="entry name" value="Aminotrans_3"/>
</dbReference>
<dbReference type="InterPro" id="IPR049704">
    <property type="entry name" value="Aminotrans_3_PPA_site"/>
</dbReference>
<dbReference type="InterPro" id="IPR050103">
    <property type="entry name" value="Class-III_PLP-dep_AT"/>
</dbReference>
<dbReference type="InterPro" id="IPR015424">
    <property type="entry name" value="PyrdxlP-dep_Trfase"/>
</dbReference>
<dbReference type="InterPro" id="IPR015421">
    <property type="entry name" value="PyrdxlP-dep_Trfase_major"/>
</dbReference>
<dbReference type="InterPro" id="IPR015422">
    <property type="entry name" value="PyrdxlP-dep_Trfase_small"/>
</dbReference>
<dbReference type="InterPro" id="IPR001763">
    <property type="entry name" value="Rhodanese-like_dom"/>
</dbReference>
<dbReference type="InterPro" id="IPR026330">
    <property type="entry name" value="SOAT"/>
</dbReference>
<dbReference type="NCBIfam" id="TIGR03246">
    <property type="entry name" value="arg_catab_astC"/>
    <property type="match status" value="1"/>
</dbReference>
<dbReference type="NCBIfam" id="TIGR00707">
    <property type="entry name" value="argD"/>
    <property type="match status" value="1"/>
</dbReference>
<dbReference type="NCBIfam" id="NF002325">
    <property type="entry name" value="PRK01278.1"/>
    <property type="match status" value="1"/>
</dbReference>
<dbReference type="NCBIfam" id="NF003468">
    <property type="entry name" value="PRK05093.1"/>
    <property type="match status" value="1"/>
</dbReference>
<dbReference type="NCBIfam" id="NF009047">
    <property type="entry name" value="PRK12381.1"/>
    <property type="match status" value="1"/>
</dbReference>
<dbReference type="PANTHER" id="PTHR11986">
    <property type="entry name" value="AMINOTRANSFERASE CLASS III"/>
    <property type="match status" value="1"/>
</dbReference>
<dbReference type="PANTHER" id="PTHR11986:SF113">
    <property type="entry name" value="SUCCINYLORNITHINE TRANSAMINASE"/>
    <property type="match status" value="1"/>
</dbReference>
<dbReference type="Pfam" id="PF00202">
    <property type="entry name" value="Aminotran_3"/>
    <property type="match status" value="1"/>
</dbReference>
<dbReference type="PIRSF" id="PIRSF000521">
    <property type="entry name" value="Transaminase_4ab_Lys_Orn"/>
    <property type="match status" value="1"/>
</dbReference>
<dbReference type="SUPFAM" id="SSF53383">
    <property type="entry name" value="PLP-dependent transferases"/>
    <property type="match status" value="1"/>
</dbReference>
<dbReference type="PROSITE" id="PS00600">
    <property type="entry name" value="AA_TRANSFER_CLASS_3"/>
    <property type="match status" value="1"/>
</dbReference>
<keyword id="KW-0032">Aminotransferase</keyword>
<keyword id="KW-0056">Arginine metabolism</keyword>
<keyword id="KW-0663">Pyridoxal phosphate</keyword>
<keyword id="KW-0808">Transferase</keyword>
<comment type="function">
    <text evidence="1">Catalyzes the transamination of N(2)-succinylornithine and alpha-ketoglutarate into N(2)-succinylglutamate semialdehyde and glutamate. Can also act as an acetylornithine aminotransferase.</text>
</comment>
<comment type="catalytic activity">
    <reaction evidence="1">
        <text>N(2)-succinyl-L-ornithine + 2-oxoglutarate = N-succinyl-L-glutamate 5-semialdehyde + L-glutamate</text>
        <dbReference type="Rhea" id="RHEA:16953"/>
        <dbReference type="ChEBI" id="CHEBI:16810"/>
        <dbReference type="ChEBI" id="CHEBI:29985"/>
        <dbReference type="ChEBI" id="CHEBI:58514"/>
        <dbReference type="ChEBI" id="CHEBI:58520"/>
        <dbReference type="EC" id="2.6.1.81"/>
    </reaction>
</comment>
<comment type="cofactor">
    <cofactor evidence="1">
        <name>pyridoxal 5'-phosphate</name>
        <dbReference type="ChEBI" id="CHEBI:597326"/>
    </cofactor>
</comment>
<comment type="pathway">
    <text evidence="1">Amino-acid degradation; L-arginine degradation via AST pathway; L-glutamate and succinate from L-arginine: step 3/5.</text>
</comment>
<comment type="similarity">
    <text evidence="1">Belongs to the class-III pyridoxal-phosphate-dependent aminotransferase family. AstC subfamily.</text>
</comment>
<name>ASTC_SALDC</name>
<reference key="1">
    <citation type="journal article" date="2011" name="J. Bacteriol.">
        <title>Comparative genomics of 28 Salmonella enterica isolates: evidence for CRISPR-mediated adaptive sublineage evolution.</title>
        <authorList>
            <person name="Fricke W.F."/>
            <person name="Mammel M.K."/>
            <person name="McDermott P.F."/>
            <person name="Tartera C."/>
            <person name="White D.G."/>
            <person name="Leclerc J.E."/>
            <person name="Ravel J."/>
            <person name="Cebula T.A."/>
        </authorList>
    </citation>
    <scope>NUCLEOTIDE SEQUENCE [LARGE SCALE GENOMIC DNA]</scope>
    <source>
        <strain>CT_02021853</strain>
    </source>
</reference>
<evidence type="ECO:0000255" key="1">
    <source>
        <dbReference type="HAMAP-Rule" id="MF_01173"/>
    </source>
</evidence>
<protein>
    <recommendedName>
        <fullName evidence="1">Succinylornithine transaminase</fullName>
        <ecNumber evidence="1">2.6.1.81</ecNumber>
    </recommendedName>
    <alternativeName>
        <fullName evidence="1">Succinylornithine aminotransferase</fullName>
    </alternativeName>
</protein>